<feature type="chain" id="PRO_1000132916" description="1-deoxy-D-xylulose-5-phosphate synthase">
    <location>
        <begin position="1"/>
        <end position="638"/>
    </location>
</feature>
<feature type="binding site" evidence="1">
    <location>
        <position position="79"/>
    </location>
    <ligand>
        <name>thiamine diphosphate</name>
        <dbReference type="ChEBI" id="CHEBI:58937"/>
    </ligand>
</feature>
<feature type="binding site" evidence="1">
    <location>
        <begin position="120"/>
        <end position="122"/>
    </location>
    <ligand>
        <name>thiamine diphosphate</name>
        <dbReference type="ChEBI" id="CHEBI:58937"/>
    </ligand>
</feature>
<feature type="binding site" evidence="1">
    <location>
        <position position="151"/>
    </location>
    <ligand>
        <name>Mg(2+)</name>
        <dbReference type="ChEBI" id="CHEBI:18420"/>
    </ligand>
</feature>
<feature type="binding site" evidence="1">
    <location>
        <begin position="152"/>
        <end position="153"/>
    </location>
    <ligand>
        <name>thiamine diphosphate</name>
        <dbReference type="ChEBI" id="CHEBI:58937"/>
    </ligand>
</feature>
<feature type="binding site" evidence="1">
    <location>
        <position position="180"/>
    </location>
    <ligand>
        <name>Mg(2+)</name>
        <dbReference type="ChEBI" id="CHEBI:18420"/>
    </ligand>
</feature>
<feature type="binding site" evidence="1">
    <location>
        <position position="180"/>
    </location>
    <ligand>
        <name>thiamine diphosphate</name>
        <dbReference type="ChEBI" id="CHEBI:58937"/>
    </ligand>
</feature>
<feature type="binding site" evidence="1">
    <location>
        <position position="289"/>
    </location>
    <ligand>
        <name>thiamine diphosphate</name>
        <dbReference type="ChEBI" id="CHEBI:58937"/>
    </ligand>
</feature>
<feature type="binding site" evidence="1">
    <location>
        <position position="371"/>
    </location>
    <ligand>
        <name>thiamine diphosphate</name>
        <dbReference type="ChEBI" id="CHEBI:58937"/>
    </ligand>
</feature>
<protein>
    <recommendedName>
        <fullName evidence="1">1-deoxy-D-xylulose-5-phosphate synthase</fullName>
        <ecNumber evidence="1">2.2.1.7</ecNumber>
    </recommendedName>
    <alternativeName>
        <fullName evidence="1">1-deoxyxylulose-5-phosphate synthase</fullName>
        <shortName evidence="1">DXP synthase</shortName>
        <shortName evidence="1">DXPS</shortName>
    </alternativeName>
</protein>
<evidence type="ECO:0000255" key="1">
    <source>
        <dbReference type="HAMAP-Rule" id="MF_00315"/>
    </source>
</evidence>
<name>DXS_RHIR8</name>
<sequence length="638" mass="68327">MTHMPETPLLDQVHYPSDLRKLEDRDLPQLAREVRDEMIDAVSRTGGHLGAGLGVVELTIAIHNVFDTPNDRLIFDVGHQCYPHKILTGRRDRIRTLRQEGGISGFTRRAESEYDPFGAAHSSTSISAGLGMAVAADLDKTDRRVIAVIGDGAMSAGMAYEALNNAGALDARLIVILNDNDMSIAPPTGAMSAYLARLASGRTYMGFRDLGKKLTAYLGKNVDRAITRAVEHARGYVTGGTMFEEMGFYHIGPIDGHSFDHLLPVLRNVRDNAQGPVLIHVVTQKGKGYAPAEAAADKYHGVNKFDVITGAQAKVKPNAPSYTSVFADALVQEATFDDKIVGITAAMPSGTGLDKLQEVFPKRCFDVGIAEQHAVTFAAGLAAEGFKPFAALYSTFLQRAYDQVVHDVAIQGLPVRFPIDRAGFVGADGPTHAGSFDTTFLATLPGFVVMAAADEAELKHMVRTAAAYDLGPISFRYPRGEGVGIEMPERGQILEIGKGRIVKQGSKVALLSFGTRLADSLAAAEDLDAAGLPTTVADARFAKPLDHDLIRQLASHHEVLITIEEGSVGGFGSQVMQFLASEGLLDNGLKIRTLVMPDIWVEQAKPEVMNAMAGLDRAGIVQTVFKALGRSLIVGAAG</sequence>
<comment type="function">
    <text evidence="1">Catalyzes the acyloin condensation reaction between C atoms 2 and 3 of pyruvate and glyceraldehyde 3-phosphate to yield 1-deoxy-D-xylulose-5-phosphate (DXP).</text>
</comment>
<comment type="catalytic activity">
    <reaction evidence="1">
        <text>D-glyceraldehyde 3-phosphate + pyruvate + H(+) = 1-deoxy-D-xylulose 5-phosphate + CO2</text>
        <dbReference type="Rhea" id="RHEA:12605"/>
        <dbReference type="ChEBI" id="CHEBI:15361"/>
        <dbReference type="ChEBI" id="CHEBI:15378"/>
        <dbReference type="ChEBI" id="CHEBI:16526"/>
        <dbReference type="ChEBI" id="CHEBI:57792"/>
        <dbReference type="ChEBI" id="CHEBI:59776"/>
        <dbReference type="EC" id="2.2.1.7"/>
    </reaction>
</comment>
<comment type="cofactor">
    <cofactor evidence="1">
        <name>Mg(2+)</name>
        <dbReference type="ChEBI" id="CHEBI:18420"/>
    </cofactor>
    <text evidence="1">Binds 1 Mg(2+) ion per subunit.</text>
</comment>
<comment type="cofactor">
    <cofactor evidence="1">
        <name>thiamine diphosphate</name>
        <dbReference type="ChEBI" id="CHEBI:58937"/>
    </cofactor>
    <text evidence="1">Binds 1 thiamine pyrophosphate per subunit.</text>
</comment>
<comment type="pathway">
    <text evidence="1">Metabolic intermediate biosynthesis; 1-deoxy-D-xylulose 5-phosphate biosynthesis; 1-deoxy-D-xylulose 5-phosphate from D-glyceraldehyde 3-phosphate and pyruvate: step 1/1.</text>
</comment>
<comment type="subunit">
    <text evidence="1">Homodimer.</text>
</comment>
<comment type="similarity">
    <text evidence="1">Belongs to the transketolase family. DXPS subfamily.</text>
</comment>
<reference key="1">
    <citation type="journal article" date="2009" name="J. Bacteriol.">
        <title>Genome sequences of three Agrobacterium biovars help elucidate the evolution of multichromosome genomes in bacteria.</title>
        <authorList>
            <person name="Slater S.C."/>
            <person name="Goldman B.S."/>
            <person name="Goodner B."/>
            <person name="Setubal J.C."/>
            <person name="Farrand S.K."/>
            <person name="Nester E.W."/>
            <person name="Burr T.J."/>
            <person name="Banta L."/>
            <person name="Dickerman A.W."/>
            <person name="Paulsen I."/>
            <person name="Otten L."/>
            <person name="Suen G."/>
            <person name="Welch R."/>
            <person name="Almeida N.F."/>
            <person name="Arnold F."/>
            <person name="Burton O.T."/>
            <person name="Du Z."/>
            <person name="Ewing A."/>
            <person name="Godsy E."/>
            <person name="Heisel S."/>
            <person name="Houmiel K.L."/>
            <person name="Jhaveri J."/>
            <person name="Lu J."/>
            <person name="Miller N.M."/>
            <person name="Norton S."/>
            <person name="Chen Q."/>
            <person name="Phoolcharoen W."/>
            <person name="Ohlin V."/>
            <person name="Ondrusek D."/>
            <person name="Pride N."/>
            <person name="Stricklin S.L."/>
            <person name="Sun J."/>
            <person name="Wheeler C."/>
            <person name="Wilson L."/>
            <person name="Zhu H."/>
            <person name="Wood D.W."/>
        </authorList>
    </citation>
    <scope>NUCLEOTIDE SEQUENCE [LARGE SCALE GENOMIC DNA]</scope>
    <source>
        <strain>K84 / ATCC BAA-868</strain>
    </source>
</reference>
<dbReference type="EC" id="2.2.1.7" evidence="1"/>
<dbReference type="EMBL" id="CP000628">
    <property type="protein sequence ID" value="ACM25700.1"/>
    <property type="molecule type" value="Genomic_DNA"/>
</dbReference>
<dbReference type="RefSeq" id="WP_007703705.1">
    <property type="nucleotide sequence ID" value="NC_011985.1"/>
</dbReference>
<dbReference type="SMR" id="B9JAL7"/>
<dbReference type="STRING" id="311403.Arad_1198"/>
<dbReference type="GeneID" id="86847522"/>
<dbReference type="KEGG" id="ara:Arad_1198"/>
<dbReference type="eggNOG" id="COG1154">
    <property type="taxonomic scope" value="Bacteria"/>
</dbReference>
<dbReference type="HOGENOM" id="CLU_009227_1_4_5"/>
<dbReference type="UniPathway" id="UPA00064">
    <property type="reaction ID" value="UER00091"/>
</dbReference>
<dbReference type="Proteomes" id="UP000001600">
    <property type="component" value="Chromosome 1"/>
</dbReference>
<dbReference type="GO" id="GO:0008661">
    <property type="term" value="F:1-deoxy-D-xylulose-5-phosphate synthase activity"/>
    <property type="evidence" value="ECO:0007669"/>
    <property type="project" value="UniProtKB-UniRule"/>
</dbReference>
<dbReference type="GO" id="GO:0000287">
    <property type="term" value="F:magnesium ion binding"/>
    <property type="evidence" value="ECO:0007669"/>
    <property type="project" value="UniProtKB-UniRule"/>
</dbReference>
<dbReference type="GO" id="GO:0030976">
    <property type="term" value="F:thiamine pyrophosphate binding"/>
    <property type="evidence" value="ECO:0007669"/>
    <property type="project" value="UniProtKB-UniRule"/>
</dbReference>
<dbReference type="GO" id="GO:0052865">
    <property type="term" value="P:1-deoxy-D-xylulose 5-phosphate biosynthetic process"/>
    <property type="evidence" value="ECO:0007669"/>
    <property type="project" value="UniProtKB-UniPathway"/>
</dbReference>
<dbReference type="GO" id="GO:0019682">
    <property type="term" value="P:glyceraldehyde-3-phosphate metabolic process"/>
    <property type="evidence" value="ECO:0007669"/>
    <property type="project" value="UniProtKB-ARBA"/>
</dbReference>
<dbReference type="GO" id="GO:0016114">
    <property type="term" value="P:terpenoid biosynthetic process"/>
    <property type="evidence" value="ECO:0007669"/>
    <property type="project" value="UniProtKB-UniRule"/>
</dbReference>
<dbReference type="GO" id="GO:0009228">
    <property type="term" value="P:thiamine biosynthetic process"/>
    <property type="evidence" value="ECO:0007669"/>
    <property type="project" value="UniProtKB-UniRule"/>
</dbReference>
<dbReference type="CDD" id="cd02007">
    <property type="entry name" value="TPP_DXS"/>
    <property type="match status" value="1"/>
</dbReference>
<dbReference type="CDD" id="cd07033">
    <property type="entry name" value="TPP_PYR_DXS_TK_like"/>
    <property type="match status" value="1"/>
</dbReference>
<dbReference type="FunFam" id="3.40.50.920:FF:000002">
    <property type="entry name" value="1-deoxy-D-xylulose-5-phosphate synthase"/>
    <property type="match status" value="1"/>
</dbReference>
<dbReference type="FunFam" id="3.40.50.970:FF:000005">
    <property type="entry name" value="1-deoxy-D-xylulose-5-phosphate synthase"/>
    <property type="match status" value="1"/>
</dbReference>
<dbReference type="Gene3D" id="3.40.50.920">
    <property type="match status" value="1"/>
</dbReference>
<dbReference type="Gene3D" id="3.40.50.970">
    <property type="match status" value="2"/>
</dbReference>
<dbReference type="HAMAP" id="MF_00315">
    <property type="entry name" value="DXP_synth"/>
    <property type="match status" value="1"/>
</dbReference>
<dbReference type="InterPro" id="IPR005477">
    <property type="entry name" value="Dxylulose-5-P_synthase"/>
</dbReference>
<dbReference type="InterPro" id="IPR029061">
    <property type="entry name" value="THDP-binding"/>
</dbReference>
<dbReference type="InterPro" id="IPR009014">
    <property type="entry name" value="Transketo_C/PFOR_II"/>
</dbReference>
<dbReference type="InterPro" id="IPR005475">
    <property type="entry name" value="Transketolase-like_Pyr-bd"/>
</dbReference>
<dbReference type="InterPro" id="IPR020826">
    <property type="entry name" value="Transketolase_BS"/>
</dbReference>
<dbReference type="InterPro" id="IPR033248">
    <property type="entry name" value="Transketolase_C"/>
</dbReference>
<dbReference type="InterPro" id="IPR049557">
    <property type="entry name" value="Transketolase_CS"/>
</dbReference>
<dbReference type="NCBIfam" id="TIGR00204">
    <property type="entry name" value="dxs"/>
    <property type="match status" value="1"/>
</dbReference>
<dbReference type="NCBIfam" id="NF003933">
    <property type="entry name" value="PRK05444.2-2"/>
    <property type="match status" value="1"/>
</dbReference>
<dbReference type="PANTHER" id="PTHR43322">
    <property type="entry name" value="1-D-DEOXYXYLULOSE 5-PHOSPHATE SYNTHASE-RELATED"/>
    <property type="match status" value="1"/>
</dbReference>
<dbReference type="PANTHER" id="PTHR43322:SF5">
    <property type="entry name" value="1-DEOXY-D-XYLULOSE-5-PHOSPHATE SYNTHASE, CHLOROPLASTIC"/>
    <property type="match status" value="1"/>
</dbReference>
<dbReference type="Pfam" id="PF13292">
    <property type="entry name" value="DXP_synthase_N"/>
    <property type="match status" value="1"/>
</dbReference>
<dbReference type="Pfam" id="PF02779">
    <property type="entry name" value="Transket_pyr"/>
    <property type="match status" value="1"/>
</dbReference>
<dbReference type="Pfam" id="PF02780">
    <property type="entry name" value="Transketolase_C"/>
    <property type="match status" value="1"/>
</dbReference>
<dbReference type="SMART" id="SM00861">
    <property type="entry name" value="Transket_pyr"/>
    <property type="match status" value="1"/>
</dbReference>
<dbReference type="SUPFAM" id="SSF52518">
    <property type="entry name" value="Thiamin diphosphate-binding fold (THDP-binding)"/>
    <property type="match status" value="2"/>
</dbReference>
<dbReference type="SUPFAM" id="SSF52922">
    <property type="entry name" value="TK C-terminal domain-like"/>
    <property type="match status" value="1"/>
</dbReference>
<dbReference type="PROSITE" id="PS00801">
    <property type="entry name" value="TRANSKETOLASE_1"/>
    <property type="match status" value="1"/>
</dbReference>
<dbReference type="PROSITE" id="PS00802">
    <property type="entry name" value="TRANSKETOLASE_2"/>
    <property type="match status" value="1"/>
</dbReference>
<keyword id="KW-0414">Isoprene biosynthesis</keyword>
<keyword id="KW-0460">Magnesium</keyword>
<keyword id="KW-0479">Metal-binding</keyword>
<keyword id="KW-0784">Thiamine biosynthesis</keyword>
<keyword id="KW-0786">Thiamine pyrophosphate</keyword>
<keyword id="KW-0808">Transferase</keyword>
<accession>B9JAL7</accession>
<gene>
    <name evidence="1" type="primary">dxs</name>
    <name type="ordered locus">Arad_1198</name>
</gene>
<organism>
    <name type="scientific">Rhizobium rhizogenes (strain K84 / ATCC BAA-868)</name>
    <name type="common">Agrobacterium radiobacter</name>
    <dbReference type="NCBI Taxonomy" id="311403"/>
    <lineage>
        <taxon>Bacteria</taxon>
        <taxon>Pseudomonadati</taxon>
        <taxon>Pseudomonadota</taxon>
        <taxon>Alphaproteobacteria</taxon>
        <taxon>Hyphomicrobiales</taxon>
        <taxon>Rhizobiaceae</taxon>
        <taxon>Rhizobium/Agrobacterium group</taxon>
        <taxon>Rhizobium</taxon>
    </lineage>
</organism>
<proteinExistence type="inferred from homology"/>